<proteinExistence type="inferred from homology"/>
<name>Y2909_STRGG</name>
<keyword id="KW-0547">Nucleotide-binding</keyword>
<dbReference type="EMBL" id="AP009493">
    <property type="protein sequence ID" value="BAG19738.1"/>
    <property type="molecule type" value="Genomic_DNA"/>
</dbReference>
<dbReference type="RefSeq" id="WP_003967012.1">
    <property type="nucleotide sequence ID" value="NC_010572.1"/>
</dbReference>
<dbReference type="SMR" id="B1W4U4"/>
<dbReference type="KEGG" id="sgr:SGR_2909"/>
<dbReference type="eggNOG" id="COG1666">
    <property type="taxonomic scope" value="Bacteria"/>
</dbReference>
<dbReference type="HOGENOM" id="CLU_099839_0_0_11"/>
<dbReference type="Proteomes" id="UP000001685">
    <property type="component" value="Chromosome"/>
</dbReference>
<dbReference type="GO" id="GO:0005829">
    <property type="term" value="C:cytosol"/>
    <property type="evidence" value="ECO:0007669"/>
    <property type="project" value="TreeGrafter"/>
</dbReference>
<dbReference type="GO" id="GO:0000166">
    <property type="term" value="F:nucleotide binding"/>
    <property type="evidence" value="ECO:0007669"/>
    <property type="project" value="TreeGrafter"/>
</dbReference>
<dbReference type="CDD" id="cd11740">
    <property type="entry name" value="YajQ_like"/>
    <property type="match status" value="1"/>
</dbReference>
<dbReference type="FunFam" id="3.30.70.860:FF:000004">
    <property type="entry name" value="UPF0234 protein AWC22_11905"/>
    <property type="match status" value="1"/>
</dbReference>
<dbReference type="FunFam" id="3.30.70.990:FF:000003">
    <property type="entry name" value="UPF0234 protein MIP_06774"/>
    <property type="match status" value="1"/>
</dbReference>
<dbReference type="Gene3D" id="3.30.70.860">
    <property type="match status" value="1"/>
</dbReference>
<dbReference type="Gene3D" id="3.30.70.990">
    <property type="entry name" value="YajQ-like, domain 2"/>
    <property type="match status" value="1"/>
</dbReference>
<dbReference type="HAMAP" id="MF_00632">
    <property type="entry name" value="YajQ"/>
    <property type="match status" value="1"/>
</dbReference>
<dbReference type="InterPro" id="IPR007551">
    <property type="entry name" value="DUF520"/>
</dbReference>
<dbReference type="InterPro" id="IPR035571">
    <property type="entry name" value="UPF0234-like_C"/>
</dbReference>
<dbReference type="InterPro" id="IPR035570">
    <property type="entry name" value="UPF0234_N"/>
</dbReference>
<dbReference type="InterPro" id="IPR036183">
    <property type="entry name" value="YajQ-like_sf"/>
</dbReference>
<dbReference type="NCBIfam" id="NF003819">
    <property type="entry name" value="PRK05412.1"/>
    <property type="match status" value="1"/>
</dbReference>
<dbReference type="PANTHER" id="PTHR30476">
    <property type="entry name" value="UPF0234 PROTEIN YAJQ"/>
    <property type="match status" value="1"/>
</dbReference>
<dbReference type="PANTHER" id="PTHR30476:SF0">
    <property type="entry name" value="UPF0234 PROTEIN YAJQ"/>
    <property type="match status" value="1"/>
</dbReference>
<dbReference type="Pfam" id="PF04461">
    <property type="entry name" value="DUF520"/>
    <property type="match status" value="1"/>
</dbReference>
<dbReference type="SUPFAM" id="SSF89963">
    <property type="entry name" value="YajQ-like"/>
    <property type="match status" value="2"/>
</dbReference>
<evidence type="ECO:0000255" key="1">
    <source>
        <dbReference type="HAMAP-Rule" id="MF_00632"/>
    </source>
</evidence>
<feature type="chain" id="PRO_1000130653" description="Nucleotide-binding protein SGR_2909">
    <location>
        <begin position="1"/>
        <end position="162"/>
    </location>
</feature>
<gene>
    <name type="ordered locus">SGR_2909</name>
</gene>
<sequence>MADSSFDIVSKVERQEVDNALNQAAKEISQRYDFKGTGASISWSGEKILMEANGEERVKAVLDIFQSKLIKRGISLKSLDAGEPQLSGKEYKIFATIEEGISQENAKKVAKIIRDEGPKGVKAQVQGDELRVSSKSRDDLQAVQALLKGQDFDFAVQFVNYR</sequence>
<protein>
    <recommendedName>
        <fullName evidence="1">Nucleotide-binding protein SGR_2909</fullName>
    </recommendedName>
</protein>
<organism>
    <name type="scientific">Streptomyces griseus subsp. griseus (strain JCM 4626 / CBS 651.72 / NBRC 13350 / KCC S-0626 / ISP 5235)</name>
    <dbReference type="NCBI Taxonomy" id="455632"/>
    <lineage>
        <taxon>Bacteria</taxon>
        <taxon>Bacillati</taxon>
        <taxon>Actinomycetota</taxon>
        <taxon>Actinomycetes</taxon>
        <taxon>Kitasatosporales</taxon>
        <taxon>Streptomycetaceae</taxon>
        <taxon>Streptomyces</taxon>
    </lineage>
</organism>
<accession>B1W4U4</accession>
<reference key="1">
    <citation type="journal article" date="2008" name="J. Bacteriol.">
        <title>Genome sequence of the streptomycin-producing microorganism Streptomyces griseus IFO 13350.</title>
        <authorList>
            <person name="Ohnishi Y."/>
            <person name="Ishikawa J."/>
            <person name="Hara H."/>
            <person name="Suzuki H."/>
            <person name="Ikenoya M."/>
            <person name="Ikeda H."/>
            <person name="Yamashita A."/>
            <person name="Hattori M."/>
            <person name="Horinouchi S."/>
        </authorList>
    </citation>
    <scope>NUCLEOTIDE SEQUENCE [LARGE SCALE GENOMIC DNA]</scope>
    <source>
        <strain>JCM 4626 / CBS 651.72 / NBRC 13350 / KCC S-0626 / ISP 5235</strain>
    </source>
</reference>
<comment type="function">
    <text evidence="1">Nucleotide-binding protein.</text>
</comment>
<comment type="similarity">
    <text evidence="1">Belongs to the YajQ family.</text>
</comment>